<evidence type="ECO:0000255" key="1">
    <source>
        <dbReference type="HAMAP-Rule" id="MF_00413"/>
    </source>
</evidence>
<feature type="chain" id="PRO_0000159052" description="Sulfur carrier protein TusA">
    <location>
        <begin position="1"/>
        <end position="81"/>
    </location>
</feature>
<feature type="active site" description="Cysteine persulfide intermediate" evidence="1">
    <location>
        <position position="19"/>
    </location>
</feature>
<comment type="function">
    <text evidence="1">Sulfur carrier protein involved in sulfur trafficking in the cell. Part of a sulfur-relay system required for 2-thiolation during synthesis of 2-thiouridine of the modified wobble base 5-methylaminomethyl-2-thiouridine (mnm(5)s(2)U) in tRNA. Interacts with IscS and stimulates its cysteine desulfurase activity. Accepts an activated sulfur from IscS, which is then transferred to TusD, and thus determines the direction of sulfur flow from IscS to 2-thiouridine formation. Also appears to be involved in sulfur transfer for the biosynthesis of molybdopterin.</text>
</comment>
<comment type="pathway">
    <text evidence="1">tRNA modification.</text>
</comment>
<comment type="subunit">
    <text evidence="1">Interacts with IscS.</text>
</comment>
<comment type="subcellular location">
    <subcellularLocation>
        <location evidence="1">Cytoplasm</location>
    </subcellularLocation>
</comment>
<comment type="similarity">
    <text evidence="1">Belongs to the sulfur carrier protein TusA family.</text>
</comment>
<organism>
    <name type="scientific">Salmonella typhimurium (strain LT2 / SGSC1412 / ATCC 700720)</name>
    <dbReference type="NCBI Taxonomy" id="99287"/>
    <lineage>
        <taxon>Bacteria</taxon>
        <taxon>Pseudomonadati</taxon>
        <taxon>Pseudomonadota</taxon>
        <taxon>Gammaproteobacteria</taxon>
        <taxon>Enterobacterales</taxon>
        <taxon>Enterobacteriaceae</taxon>
        <taxon>Salmonella</taxon>
    </lineage>
</organism>
<accession>P67100</accession>
<accession>Q8XGC6</accession>
<proteinExistence type="inferred from homology"/>
<name>TUSA_SALTY</name>
<dbReference type="EMBL" id="AE006468">
    <property type="protein sequence ID" value="AAL22438.1"/>
    <property type="molecule type" value="Genomic_DNA"/>
</dbReference>
<dbReference type="RefSeq" id="WP_001541054.1">
    <property type="nucleotide sequence ID" value="NC_003197.2"/>
</dbReference>
<dbReference type="SMR" id="P67100"/>
<dbReference type="STRING" id="99287.STM3578"/>
<dbReference type="PaxDb" id="99287-STM3578"/>
<dbReference type="GeneID" id="66757902"/>
<dbReference type="KEGG" id="stm:STM3578"/>
<dbReference type="PATRIC" id="fig|99287.12.peg.3781"/>
<dbReference type="HOGENOM" id="CLU_165255_5_0_6"/>
<dbReference type="OMA" id="FCQFLGH"/>
<dbReference type="PhylomeDB" id="P67100"/>
<dbReference type="BioCyc" id="SENT99287:STM3578-MONOMER"/>
<dbReference type="Proteomes" id="UP000001014">
    <property type="component" value="Chromosome"/>
</dbReference>
<dbReference type="GO" id="GO:0005737">
    <property type="term" value="C:cytoplasm"/>
    <property type="evidence" value="ECO:0007669"/>
    <property type="project" value="UniProtKB-SubCell"/>
</dbReference>
<dbReference type="GO" id="GO:0097163">
    <property type="term" value="F:sulfur carrier activity"/>
    <property type="evidence" value="ECO:0007669"/>
    <property type="project" value="UniProtKB-UniRule"/>
</dbReference>
<dbReference type="GO" id="GO:0002143">
    <property type="term" value="P:tRNA wobble position uridine thiolation"/>
    <property type="evidence" value="ECO:0007669"/>
    <property type="project" value="InterPro"/>
</dbReference>
<dbReference type="CDD" id="cd03423">
    <property type="entry name" value="SirA"/>
    <property type="match status" value="1"/>
</dbReference>
<dbReference type="Gene3D" id="3.30.110.40">
    <property type="entry name" value="TusA-like domain"/>
    <property type="match status" value="1"/>
</dbReference>
<dbReference type="HAMAP" id="MF_00413">
    <property type="entry name" value="Thiourid_synth_A"/>
    <property type="match status" value="1"/>
</dbReference>
<dbReference type="InterPro" id="IPR022931">
    <property type="entry name" value="Sulphur_carrier_TusA"/>
</dbReference>
<dbReference type="InterPro" id="IPR001455">
    <property type="entry name" value="TusA-like"/>
</dbReference>
<dbReference type="InterPro" id="IPR036868">
    <property type="entry name" value="TusA-like_sf"/>
</dbReference>
<dbReference type="NCBIfam" id="NF001423">
    <property type="entry name" value="PRK00299.1"/>
    <property type="match status" value="1"/>
</dbReference>
<dbReference type="PANTHER" id="PTHR33279:SF2">
    <property type="entry name" value="SULFUR CARRIER PROTEIN TUSA"/>
    <property type="match status" value="1"/>
</dbReference>
<dbReference type="PANTHER" id="PTHR33279">
    <property type="entry name" value="SULFUR CARRIER PROTEIN YEDF-RELATED"/>
    <property type="match status" value="1"/>
</dbReference>
<dbReference type="Pfam" id="PF01206">
    <property type="entry name" value="TusA"/>
    <property type="match status" value="1"/>
</dbReference>
<dbReference type="SUPFAM" id="SSF64307">
    <property type="entry name" value="SirA-like"/>
    <property type="match status" value="1"/>
</dbReference>
<dbReference type="PROSITE" id="PS01148">
    <property type="entry name" value="UPF0033"/>
    <property type="match status" value="1"/>
</dbReference>
<reference key="1">
    <citation type="journal article" date="2001" name="Nature">
        <title>Complete genome sequence of Salmonella enterica serovar Typhimurium LT2.</title>
        <authorList>
            <person name="McClelland M."/>
            <person name="Sanderson K.E."/>
            <person name="Spieth J."/>
            <person name="Clifton S.W."/>
            <person name="Latreille P."/>
            <person name="Courtney L."/>
            <person name="Porwollik S."/>
            <person name="Ali J."/>
            <person name="Dante M."/>
            <person name="Du F."/>
            <person name="Hou S."/>
            <person name="Layman D."/>
            <person name="Leonard S."/>
            <person name="Nguyen C."/>
            <person name="Scott K."/>
            <person name="Holmes A."/>
            <person name="Grewal N."/>
            <person name="Mulvaney E."/>
            <person name="Ryan E."/>
            <person name="Sun H."/>
            <person name="Florea L."/>
            <person name="Miller W."/>
            <person name="Stoneking T."/>
            <person name="Nhan M."/>
            <person name="Waterston R."/>
            <person name="Wilson R.K."/>
        </authorList>
    </citation>
    <scope>NUCLEOTIDE SEQUENCE [LARGE SCALE GENOMIC DNA]</scope>
    <source>
        <strain>LT2 / SGSC1412 / ATCC 700720</strain>
    </source>
</reference>
<protein>
    <recommendedName>
        <fullName evidence="1">Sulfur carrier protein TusA</fullName>
    </recommendedName>
    <alternativeName>
        <fullName evidence="1">Sulfur mediator TusA</fullName>
    </alternativeName>
    <alternativeName>
        <fullName evidence="1">Sulfur transfer protein TusA</fullName>
    </alternativeName>
    <alternativeName>
        <fullName evidence="1">tRNA 2-thiouridine synthesizing protein A</fullName>
    </alternativeName>
</protein>
<sequence>MSDLFSSPDHTLDALGLRCPEPVMMVRKTVRNMQTGETLLIIADDPATTRDIPGFCTFMEHDLLAQETEGLPYRYLLRKAH</sequence>
<gene>
    <name evidence="1" type="primary">tusA</name>
    <name type="ordered locus">STM3578</name>
</gene>
<keyword id="KW-0963">Cytoplasm</keyword>
<keyword id="KW-1185">Reference proteome</keyword>
<keyword id="KW-0819">tRNA processing</keyword>